<sequence length="127" mass="13006">MSKAAEVIEIIKGMTALELKELKELFEETFGVTAAAPVAVAAAPAAGAAAAAPAAEEKTEFDVILKNPGANKIAVIKVVRELTGLGLKEAKDLVDGAPKPVKEKVSKADADAAAEKLKEAGAEVEVK</sequence>
<gene>
    <name evidence="1" type="primary">rplL</name>
    <name type="ordered locus">STH3086</name>
</gene>
<dbReference type="EMBL" id="AP006840">
    <property type="protein sequence ID" value="BAD42068.1"/>
    <property type="molecule type" value="Genomic_DNA"/>
</dbReference>
<dbReference type="RefSeq" id="WP_011197201.1">
    <property type="nucleotide sequence ID" value="NC_006177.1"/>
</dbReference>
<dbReference type="SMR" id="Q67JT2"/>
<dbReference type="STRING" id="292459.STH3086"/>
<dbReference type="KEGG" id="sth:STH3086"/>
<dbReference type="eggNOG" id="COG0222">
    <property type="taxonomic scope" value="Bacteria"/>
</dbReference>
<dbReference type="HOGENOM" id="CLU_086499_3_2_9"/>
<dbReference type="OrthoDB" id="9811748at2"/>
<dbReference type="Proteomes" id="UP000000417">
    <property type="component" value="Chromosome"/>
</dbReference>
<dbReference type="GO" id="GO:0022625">
    <property type="term" value="C:cytosolic large ribosomal subunit"/>
    <property type="evidence" value="ECO:0007669"/>
    <property type="project" value="TreeGrafter"/>
</dbReference>
<dbReference type="GO" id="GO:0003729">
    <property type="term" value="F:mRNA binding"/>
    <property type="evidence" value="ECO:0007669"/>
    <property type="project" value="TreeGrafter"/>
</dbReference>
<dbReference type="GO" id="GO:0003735">
    <property type="term" value="F:structural constituent of ribosome"/>
    <property type="evidence" value="ECO:0007669"/>
    <property type="project" value="InterPro"/>
</dbReference>
<dbReference type="GO" id="GO:0006412">
    <property type="term" value="P:translation"/>
    <property type="evidence" value="ECO:0007669"/>
    <property type="project" value="UniProtKB-UniRule"/>
</dbReference>
<dbReference type="CDD" id="cd00387">
    <property type="entry name" value="Ribosomal_L7_L12"/>
    <property type="match status" value="1"/>
</dbReference>
<dbReference type="FunFam" id="3.30.1390.10:FF:000001">
    <property type="entry name" value="50S ribosomal protein L7/L12"/>
    <property type="match status" value="1"/>
</dbReference>
<dbReference type="Gene3D" id="3.30.1390.10">
    <property type="match status" value="1"/>
</dbReference>
<dbReference type="Gene3D" id="1.20.5.710">
    <property type="entry name" value="Single helix bin"/>
    <property type="match status" value="1"/>
</dbReference>
<dbReference type="HAMAP" id="MF_00368">
    <property type="entry name" value="Ribosomal_bL12"/>
    <property type="match status" value="1"/>
</dbReference>
<dbReference type="InterPro" id="IPR000206">
    <property type="entry name" value="Ribosomal_bL12"/>
</dbReference>
<dbReference type="InterPro" id="IPR013823">
    <property type="entry name" value="Ribosomal_bL12_C"/>
</dbReference>
<dbReference type="InterPro" id="IPR014719">
    <property type="entry name" value="Ribosomal_bL12_C/ClpS-like"/>
</dbReference>
<dbReference type="InterPro" id="IPR008932">
    <property type="entry name" value="Ribosomal_bL12_oligo"/>
</dbReference>
<dbReference type="InterPro" id="IPR036235">
    <property type="entry name" value="Ribosomal_bL12_oligo_N_sf"/>
</dbReference>
<dbReference type="NCBIfam" id="TIGR00855">
    <property type="entry name" value="L12"/>
    <property type="match status" value="1"/>
</dbReference>
<dbReference type="PANTHER" id="PTHR45987">
    <property type="entry name" value="39S RIBOSOMAL PROTEIN L12"/>
    <property type="match status" value="1"/>
</dbReference>
<dbReference type="PANTHER" id="PTHR45987:SF4">
    <property type="entry name" value="LARGE RIBOSOMAL SUBUNIT PROTEIN BL12M"/>
    <property type="match status" value="1"/>
</dbReference>
<dbReference type="Pfam" id="PF00542">
    <property type="entry name" value="Ribosomal_L12"/>
    <property type="match status" value="1"/>
</dbReference>
<dbReference type="Pfam" id="PF16320">
    <property type="entry name" value="Ribosomal_L12_N"/>
    <property type="match status" value="1"/>
</dbReference>
<dbReference type="SUPFAM" id="SSF54736">
    <property type="entry name" value="ClpS-like"/>
    <property type="match status" value="1"/>
</dbReference>
<dbReference type="SUPFAM" id="SSF48300">
    <property type="entry name" value="Ribosomal protein L7/12, oligomerisation (N-terminal) domain"/>
    <property type="match status" value="1"/>
</dbReference>
<protein>
    <recommendedName>
        <fullName evidence="1">Large ribosomal subunit protein bL12</fullName>
    </recommendedName>
    <alternativeName>
        <fullName evidence="2">50S ribosomal protein L7/L12</fullName>
    </alternativeName>
</protein>
<proteinExistence type="inferred from homology"/>
<keyword id="KW-1185">Reference proteome</keyword>
<keyword id="KW-0687">Ribonucleoprotein</keyword>
<keyword id="KW-0689">Ribosomal protein</keyword>
<organism>
    <name type="scientific">Symbiobacterium thermophilum (strain DSM 24528 / JCM 14929 / IAM 14863 / T)</name>
    <dbReference type="NCBI Taxonomy" id="292459"/>
    <lineage>
        <taxon>Bacteria</taxon>
        <taxon>Bacillati</taxon>
        <taxon>Bacillota</taxon>
        <taxon>Clostridia</taxon>
        <taxon>Eubacteriales</taxon>
        <taxon>Symbiobacteriaceae</taxon>
        <taxon>Symbiobacterium</taxon>
    </lineage>
</organism>
<accession>Q67JT2</accession>
<feature type="chain" id="PRO_0000243507" description="Large ribosomal subunit protein bL12">
    <location>
        <begin position="1"/>
        <end position="127"/>
    </location>
</feature>
<comment type="function">
    <text evidence="1">Forms part of the ribosomal stalk which helps the ribosome interact with GTP-bound translation factors. Is thus essential for accurate translation.</text>
</comment>
<comment type="subunit">
    <text evidence="1">Homodimer. Part of the ribosomal stalk of the 50S ribosomal subunit. Forms a multimeric L10(L12)X complex, where L10 forms an elongated spine to which 2 to 4 L12 dimers bind in a sequential fashion. Binds GTP-bound translation factors.</text>
</comment>
<comment type="similarity">
    <text evidence="1">Belongs to the bacterial ribosomal protein bL12 family.</text>
</comment>
<evidence type="ECO:0000255" key="1">
    <source>
        <dbReference type="HAMAP-Rule" id="MF_00368"/>
    </source>
</evidence>
<evidence type="ECO:0000305" key="2"/>
<name>RL7_SYMTH</name>
<reference key="1">
    <citation type="journal article" date="2004" name="Nucleic Acids Res.">
        <title>Genome sequence of Symbiobacterium thermophilum, an uncultivable bacterium that depends on microbial commensalism.</title>
        <authorList>
            <person name="Ueda K."/>
            <person name="Yamashita A."/>
            <person name="Ishikawa J."/>
            <person name="Shimada M."/>
            <person name="Watsuji T."/>
            <person name="Morimura K."/>
            <person name="Ikeda H."/>
            <person name="Hattori M."/>
            <person name="Beppu T."/>
        </authorList>
    </citation>
    <scope>NUCLEOTIDE SEQUENCE [LARGE SCALE GENOMIC DNA]</scope>
    <source>
        <strain>DSM 24528 / JCM 14929 / IAM 14863 / T</strain>
    </source>
</reference>